<comment type="function">
    <text evidence="1">Transferase that catalyzes the transfer of sulfur from thiosulfate to thiophilic acceptors such as cyanide or dithiols. May function in a CysM-independent thiosulfate assimilation pathway by catalyzing the conversion of thiosulfate to sulfite, which can then be used for L-cysteine biosynthesis.</text>
</comment>
<comment type="catalytic activity">
    <reaction evidence="1">
        <text>thiosulfate + hydrogen cyanide = thiocyanate + sulfite + 2 H(+)</text>
        <dbReference type="Rhea" id="RHEA:16881"/>
        <dbReference type="ChEBI" id="CHEBI:15378"/>
        <dbReference type="ChEBI" id="CHEBI:17359"/>
        <dbReference type="ChEBI" id="CHEBI:18022"/>
        <dbReference type="ChEBI" id="CHEBI:18407"/>
        <dbReference type="ChEBI" id="CHEBI:33542"/>
        <dbReference type="EC" id="2.8.1.1"/>
    </reaction>
</comment>
<comment type="catalytic activity">
    <reaction evidence="1">
        <text>thiosulfate + [thioredoxin]-dithiol = [thioredoxin]-disulfide + hydrogen sulfide + sulfite + 2 H(+)</text>
        <dbReference type="Rhea" id="RHEA:83859"/>
        <dbReference type="Rhea" id="RHEA-COMP:10698"/>
        <dbReference type="Rhea" id="RHEA-COMP:10700"/>
        <dbReference type="ChEBI" id="CHEBI:15378"/>
        <dbReference type="ChEBI" id="CHEBI:17359"/>
        <dbReference type="ChEBI" id="CHEBI:29919"/>
        <dbReference type="ChEBI" id="CHEBI:29950"/>
        <dbReference type="ChEBI" id="CHEBI:33542"/>
        <dbReference type="ChEBI" id="CHEBI:50058"/>
    </reaction>
</comment>
<comment type="subcellular location">
    <subcellularLocation>
        <location evidence="1">Cytoplasm</location>
    </subcellularLocation>
</comment>
<comment type="similarity">
    <text evidence="1">Belongs to the GlpE family.</text>
</comment>
<feature type="chain" id="PRO_1000190105" description="Thiosulfate sulfurtransferase GlpE">
    <location>
        <begin position="1"/>
        <end position="108"/>
    </location>
</feature>
<feature type="domain" description="Rhodanese" evidence="1">
    <location>
        <begin position="17"/>
        <end position="105"/>
    </location>
</feature>
<feature type="active site" description="Cysteine persulfide intermediate" evidence="1">
    <location>
        <position position="65"/>
    </location>
</feature>
<protein>
    <recommendedName>
        <fullName evidence="1">Thiosulfate sulfurtransferase GlpE</fullName>
        <ecNumber evidence="1">2.8.1.1</ecNumber>
    </recommendedName>
</protein>
<evidence type="ECO:0000255" key="1">
    <source>
        <dbReference type="HAMAP-Rule" id="MF_01009"/>
    </source>
</evidence>
<accession>B5FKE4</accession>
<reference key="1">
    <citation type="journal article" date="2011" name="J. Bacteriol.">
        <title>Comparative genomics of 28 Salmonella enterica isolates: evidence for CRISPR-mediated adaptive sublineage evolution.</title>
        <authorList>
            <person name="Fricke W.F."/>
            <person name="Mammel M.K."/>
            <person name="McDermott P.F."/>
            <person name="Tartera C."/>
            <person name="White D.G."/>
            <person name="Leclerc J.E."/>
            <person name="Ravel J."/>
            <person name="Cebula T.A."/>
        </authorList>
    </citation>
    <scope>NUCLEOTIDE SEQUENCE [LARGE SCALE GENOMIC DNA]</scope>
    <source>
        <strain>CT_02021853</strain>
    </source>
</reference>
<proteinExistence type="inferred from homology"/>
<organism>
    <name type="scientific">Salmonella dublin (strain CT_02021853)</name>
    <dbReference type="NCBI Taxonomy" id="439851"/>
    <lineage>
        <taxon>Bacteria</taxon>
        <taxon>Pseudomonadati</taxon>
        <taxon>Pseudomonadota</taxon>
        <taxon>Gammaproteobacteria</taxon>
        <taxon>Enterobacterales</taxon>
        <taxon>Enterobacteriaceae</taxon>
        <taxon>Salmonella</taxon>
    </lineage>
</organism>
<keyword id="KW-0963">Cytoplasm</keyword>
<keyword id="KW-0808">Transferase</keyword>
<gene>
    <name evidence="1" type="primary">glpE</name>
    <name type="ordered locus">SeD_A3895</name>
</gene>
<name>GLPE_SALDC</name>
<sequence>MEQFECITVEEAYQKLHQGAAVLVDIRDPQSYAMGHAPQAFHLTNDTLGAFMREHGFDTAVMVMCYHGNSSKGAAQYLLQQGYDAVYSIDGGFEAWHRRFPADVANGA</sequence>
<dbReference type="EC" id="2.8.1.1" evidence="1"/>
<dbReference type="EMBL" id="CP001144">
    <property type="protein sequence ID" value="ACH74843.1"/>
    <property type="molecule type" value="Genomic_DNA"/>
</dbReference>
<dbReference type="RefSeq" id="WP_000434523.1">
    <property type="nucleotide sequence ID" value="NC_011205.1"/>
</dbReference>
<dbReference type="SMR" id="B5FKE4"/>
<dbReference type="KEGG" id="sed:SeD_A3895"/>
<dbReference type="HOGENOM" id="CLU_089574_14_0_6"/>
<dbReference type="Proteomes" id="UP000008322">
    <property type="component" value="Chromosome"/>
</dbReference>
<dbReference type="GO" id="GO:0005737">
    <property type="term" value="C:cytoplasm"/>
    <property type="evidence" value="ECO:0007669"/>
    <property type="project" value="UniProtKB-SubCell"/>
</dbReference>
<dbReference type="GO" id="GO:0004792">
    <property type="term" value="F:thiosulfate-cyanide sulfurtransferase activity"/>
    <property type="evidence" value="ECO:0007669"/>
    <property type="project" value="UniProtKB-UniRule"/>
</dbReference>
<dbReference type="GO" id="GO:0006071">
    <property type="term" value="P:glycerol metabolic process"/>
    <property type="evidence" value="ECO:0007669"/>
    <property type="project" value="UniProtKB-UniRule"/>
</dbReference>
<dbReference type="CDD" id="cd01444">
    <property type="entry name" value="GlpE_ST"/>
    <property type="match status" value="1"/>
</dbReference>
<dbReference type="FunFam" id="3.40.250.10:FF:000007">
    <property type="entry name" value="Thiosulfate sulfurtransferase GlpE"/>
    <property type="match status" value="1"/>
</dbReference>
<dbReference type="Gene3D" id="3.40.250.10">
    <property type="entry name" value="Rhodanese-like domain"/>
    <property type="match status" value="1"/>
</dbReference>
<dbReference type="HAMAP" id="MF_01009">
    <property type="entry name" value="Thiosulf_sulfurtr"/>
    <property type="match status" value="1"/>
</dbReference>
<dbReference type="InterPro" id="IPR050229">
    <property type="entry name" value="GlpE_sulfurtransferase"/>
</dbReference>
<dbReference type="InterPro" id="IPR001763">
    <property type="entry name" value="Rhodanese-like_dom"/>
</dbReference>
<dbReference type="InterPro" id="IPR036873">
    <property type="entry name" value="Rhodanese-like_dom_sf"/>
</dbReference>
<dbReference type="InterPro" id="IPR023695">
    <property type="entry name" value="Thiosulf_sulfurTrfase"/>
</dbReference>
<dbReference type="NCBIfam" id="NF001195">
    <property type="entry name" value="PRK00162.1"/>
    <property type="match status" value="1"/>
</dbReference>
<dbReference type="PANTHER" id="PTHR43031">
    <property type="entry name" value="FAD-DEPENDENT OXIDOREDUCTASE"/>
    <property type="match status" value="1"/>
</dbReference>
<dbReference type="PANTHER" id="PTHR43031:SF6">
    <property type="entry name" value="THIOSULFATE SULFURTRANSFERASE GLPE"/>
    <property type="match status" value="1"/>
</dbReference>
<dbReference type="Pfam" id="PF00581">
    <property type="entry name" value="Rhodanese"/>
    <property type="match status" value="1"/>
</dbReference>
<dbReference type="SMART" id="SM00450">
    <property type="entry name" value="RHOD"/>
    <property type="match status" value="1"/>
</dbReference>
<dbReference type="SUPFAM" id="SSF52821">
    <property type="entry name" value="Rhodanese/Cell cycle control phosphatase"/>
    <property type="match status" value="1"/>
</dbReference>
<dbReference type="PROSITE" id="PS50206">
    <property type="entry name" value="RHODANESE_3"/>
    <property type="match status" value="1"/>
</dbReference>